<comment type="function">
    <text evidence="1">Excises uracil residues from the DNA which can arise as a result of misincorporation of dUMP residues by DNA polymerase or due to deamination of cytosine.</text>
</comment>
<comment type="catalytic activity">
    <reaction evidence="1">
        <text>Hydrolyzes single-stranded DNA or mismatched double-stranded DNA and polynucleotides, releasing free uracil.</text>
        <dbReference type="EC" id="3.2.2.27"/>
    </reaction>
</comment>
<comment type="subcellular location">
    <subcellularLocation>
        <location evidence="1">Cytoplasm</location>
    </subcellularLocation>
</comment>
<comment type="similarity">
    <text evidence="1">Belongs to the uracil-DNA glycosylase (UDG) superfamily. UNG family.</text>
</comment>
<name>UNG_DEIRA</name>
<sequence>MTDQPDLFGLAPDAPRPIIPANLPEDWQEALLPEFSAPYFHELTDFLRQERKEYTIYPPAPDVFNALRYTPLGEVKVLILGQDPYHGPNQAHGLSFSVRPGVRVPPSLRNIYKELTEDIPGFVAPKHGYLRSWAEQGVLLLNAVLTVRAGQANSHQGKGWEHFTDAVIKAVNAKEERVVFILWGSYARKKKKLITGKNHVVIESGHPSPLSEQYFFGTRPFSKTNEALEKAGRGPVEWQLPATVTEE</sequence>
<dbReference type="EC" id="3.2.2.27" evidence="1"/>
<dbReference type="EMBL" id="AE000513">
    <property type="protein sequence ID" value="AAF10269.1"/>
    <property type="molecule type" value="Genomic_DNA"/>
</dbReference>
<dbReference type="PIR" id="F75486">
    <property type="entry name" value="F75486"/>
</dbReference>
<dbReference type="RefSeq" id="NP_294412.1">
    <property type="nucleotide sequence ID" value="NC_001263.1"/>
</dbReference>
<dbReference type="RefSeq" id="WP_010887334.1">
    <property type="nucleotide sequence ID" value="NC_001263.1"/>
</dbReference>
<dbReference type="PDB" id="2BOO">
    <property type="method" value="X-ray"/>
    <property type="resolution" value="1.80 A"/>
    <property type="chains" value="A=1-247"/>
</dbReference>
<dbReference type="PDB" id="3UFM">
    <property type="method" value="X-ray"/>
    <property type="resolution" value="1.95 A"/>
    <property type="chains" value="A=1-247"/>
</dbReference>
<dbReference type="PDB" id="4UQM">
    <property type="method" value="X-ray"/>
    <property type="resolution" value="1.35 A"/>
    <property type="chains" value="A=1-247"/>
</dbReference>
<dbReference type="PDBsum" id="2BOO"/>
<dbReference type="PDBsum" id="3UFM"/>
<dbReference type="PDBsum" id="4UQM"/>
<dbReference type="SMR" id="Q9RWH9"/>
<dbReference type="FunCoup" id="Q9RWH9">
    <property type="interactions" value="321"/>
</dbReference>
<dbReference type="STRING" id="243230.DR_0689"/>
<dbReference type="PaxDb" id="243230-DR_0689"/>
<dbReference type="EnsemblBacteria" id="AAF10269">
    <property type="protein sequence ID" value="AAF10269"/>
    <property type="gene ID" value="DR_0689"/>
</dbReference>
<dbReference type="GeneID" id="69516936"/>
<dbReference type="KEGG" id="dra:DR_0689"/>
<dbReference type="PATRIC" id="fig|243230.17.peg.867"/>
<dbReference type="eggNOG" id="COG0692">
    <property type="taxonomic scope" value="Bacteria"/>
</dbReference>
<dbReference type="HOGENOM" id="CLU_032162_3_1_0"/>
<dbReference type="InParanoid" id="Q9RWH9"/>
<dbReference type="OrthoDB" id="9804372at2"/>
<dbReference type="BRENDA" id="3.2.2.27">
    <property type="organism ID" value="1856"/>
</dbReference>
<dbReference type="EvolutionaryTrace" id="Q9RWH9"/>
<dbReference type="Proteomes" id="UP000002524">
    <property type="component" value="Chromosome 1"/>
</dbReference>
<dbReference type="GO" id="GO:0005737">
    <property type="term" value="C:cytoplasm"/>
    <property type="evidence" value="ECO:0007669"/>
    <property type="project" value="UniProtKB-SubCell"/>
</dbReference>
<dbReference type="GO" id="GO:0004844">
    <property type="term" value="F:uracil DNA N-glycosylase activity"/>
    <property type="evidence" value="ECO:0007669"/>
    <property type="project" value="UniProtKB-UniRule"/>
</dbReference>
<dbReference type="GO" id="GO:0097510">
    <property type="term" value="P:base-excision repair, AP site formation via deaminated base removal"/>
    <property type="evidence" value="ECO:0000318"/>
    <property type="project" value="GO_Central"/>
</dbReference>
<dbReference type="CDD" id="cd10027">
    <property type="entry name" value="UDG-F1-like"/>
    <property type="match status" value="1"/>
</dbReference>
<dbReference type="FunFam" id="3.40.470.10:FF:000001">
    <property type="entry name" value="Uracil-DNA glycosylase"/>
    <property type="match status" value="1"/>
</dbReference>
<dbReference type="Gene3D" id="3.40.470.10">
    <property type="entry name" value="Uracil-DNA glycosylase-like domain"/>
    <property type="match status" value="1"/>
</dbReference>
<dbReference type="HAMAP" id="MF_00148">
    <property type="entry name" value="UDG"/>
    <property type="match status" value="1"/>
</dbReference>
<dbReference type="InterPro" id="IPR002043">
    <property type="entry name" value="UDG_fam1"/>
</dbReference>
<dbReference type="InterPro" id="IPR018085">
    <property type="entry name" value="Ura-DNA_Glyclase_AS"/>
</dbReference>
<dbReference type="InterPro" id="IPR005122">
    <property type="entry name" value="Uracil-DNA_glycosylase-like"/>
</dbReference>
<dbReference type="InterPro" id="IPR036895">
    <property type="entry name" value="Uracil-DNA_glycosylase-like_sf"/>
</dbReference>
<dbReference type="NCBIfam" id="NF003588">
    <property type="entry name" value="PRK05254.1-1"/>
    <property type="match status" value="1"/>
</dbReference>
<dbReference type="NCBIfam" id="NF003589">
    <property type="entry name" value="PRK05254.1-2"/>
    <property type="match status" value="1"/>
</dbReference>
<dbReference type="NCBIfam" id="NF003591">
    <property type="entry name" value="PRK05254.1-4"/>
    <property type="match status" value="1"/>
</dbReference>
<dbReference type="NCBIfam" id="NF003592">
    <property type="entry name" value="PRK05254.1-5"/>
    <property type="match status" value="1"/>
</dbReference>
<dbReference type="NCBIfam" id="TIGR00628">
    <property type="entry name" value="ung"/>
    <property type="match status" value="1"/>
</dbReference>
<dbReference type="PANTHER" id="PTHR11264">
    <property type="entry name" value="URACIL-DNA GLYCOSYLASE"/>
    <property type="match status" value="1"/>
</dbReference>
<dbReference type="PANTHER" id="PTHR11264:SF0">
    <property type="entry name" value="URACIL-DNA GLYCOSYLASE"/>
    <property type="match status" value="1"/>
</dbReference>
<dbReference type="Pfam" id="PF03167">
    <property type="entry name" value="UDG"/>
    <property type="match status" value="1"/>
</dbReference>
<dbReference type="SMART" id="SM00986">
    <property type="entry name" value="UDG"/>
    <property type="match status" value="1"/>
</dbReference>
<dbReference type="SMART" id="SM00987">
    <property type="entry name" value="UreE_C"/>
    <property type="match status" value="1"/>
</dbReference>
<dbReference type="SUPFAM" id="SSF52141">
    <property type="entry name" value="Uracil-DNA glycosylase-like"/>
    <property type="match status" value="1"/>
</dbReference>
<dbReference type="PROSITE" id="PS00130">
    <property type="entry name" value="U_DNA_GLYCOSYLASE"/>
    <property type="match status" value="1"/>
</dbReference>
<gene>
    <name evidence="1" type="primary">ung</name>
    <name type="ordered locus">DR_0689</name>
</gene>
<organism>
    <name type="scientific">Deinococcus radiodurans (strain ATCC 13939 / DSM 20539 / JCM 16871 / CCUG 27074 / LMG 4051 / NBRC 15346 / NCIMB 9279 / VKM B-1422 / R1)</name>
    <dbReference type="NCBI Taxonomy" id="243230"/>
    <lineage>
        <taxon>Bacteria</taxon>
        <taxon>Thermotogati</taxon>
        <taxon>Deinococcota</taxon>
        <taxon>Deinococci</taxon>
        <taxon>Deinococcales</taxon>
        <taxon>Deinococcaceae</taxon>
        <taxon>Deinococcus</taxon>
    </lineage>
</organism>
<protein>
    <recommendedName>
        <fullName evidence="1">Uracil-DNA glycosylase</fullName>
        <shortName evidence="1">UDG</shortName>
        <ecNumber evidence="1">3.2.2.27</ecNumber>
    </recommendedName>
</protein>
<accession>Q9RWH9</accession>
<proteinExistence type="evidence at protein level"/>
<feature type="chain" id="PRO_0000176090" description="Uracil-DNA glycosylase">
    <location>
        <begin position="1"/>
        <end position="247"/>
    </location>
</feature>
<feature type="active site" description="Proton acceptor" evidence="1">
    <location>
        <position position="83"/>
    </location>
</feature>
<feature type="helix" evidence="2">
    <location>
        <begin position="25"/>
        <end position="35"/>
    </location>
</feature>
<feature type="helix" evidence="2">
    <location>
        <begin position="38"/>
        <end position="53"/>
    </location>
</feature>
<feature type="strand" evidence="2">
    <location>
        <begin position="56"/>
        <end position="58"/>
    </location>
</feature>
<feature type="helix" evidence="2">
    <location>
        <begin position="60"/>
        <end position="62"/>
    </location>
</feature>
<feature type="helix" evidence="2">
    <location>
        <begin position="65"/>
        <end position="69"/>
    </location>
</feature>
<feature type="helix" evidence="2">
    <location>
        <begin position="72"/>
        <end position="74"/>
    </location>
</feature>
<feature type="strand" evidence="2">
    <location>
        <begin position="76"/>
        <end position="83"/>
    </location>
</feature>
<feature type="turn" evidence="2">
    <location>
        <begin position="88"/>
        <end position="90"/>
    </location>
</feature>
<feature type="strand" evidence="2">
    <location>
        <begin position="92"/>
        <end position="94"/>
    </location>
</feature>
<feature type="helix" evidence="2">
    <location>
        <begin position="106"/>
        <end position="118"/>
    </location>
</feature>
<feature type="helix" evidence="2">
    <location>
        <begin position="131"/>
        <end position="134"/>
    </location>
</feature>
<feature type="turn" evidence="2">
    <location>
        <begin position="135"/>
        <end position="137"/>
    </location>
</feature>
<feature type="strand" evidence="2">
    <location>
        <begin position="138"/>
        <end position="144"/>
    </location>
</feature>
<feature type="turn" evidence="2">
    <location>
        <begin position="152"/>
        <end position="157"/>
    </location>
</feature>
<feature type="helix" evidence="2">
    <location>
        <begin position="160"/>
        <end position="172"/>
    </location>
</feature>
<feature type="strand" evidence="2">
    <location>
        <begin position="179"/>
        <end position="184"/>
    </location>
</feature>
<feature type="helix" evidence="2">
    <location>
        <begin position="185"/>
        <end position="188"/>
    </location>
</feature>
<feature type="helix" evidence="2">
    <location>
        <begin position="189"/>
        <end position="193"/>
    </location>
</feature>
<feature type="strand" evidence="2">
    <location>
        <begin position="200"/>
        <end position="204"/>
    </location>
</feature>
<feature type="helix" evidence="2">
    <location>
        <begin position="209"/>
        <end position="214"/>
    </location>
</feature>
<feature type="turn" evidence="2">
    <location>
        <begin position="215"/>
        <end position="217"/>
    </location>
</feature>
<feature type="helix" evidence="2">
    <location>
        <begin position="220"/>
        <end position="230"/>
    </location>
</feature>
<evidence type="ECO:0000255" key="1">
    <source>
        <dbReference type="HAMAP-Rule" id="MF_00148"/>
    </source>
</evidence>
<evidence type="ECO:0007829" key="2">
    <source>
        <dbReference type="PDB" id="4UQM"/>
    </source>
</evidence>
<reference key="1">
    <citation type="journal article" date="1999" name="Science">
        <title>Genome sequence of the radioresistant bacterium Deinococcus radiodurans R1.</title>
        <authorList>
            <person name="White O."/>
            <person name="Eisen J.A."/>
            <person name="Heidelberg J.F."/>
            <person name="Hickey E.K."/>
            <person name="Peterson J.D."/>
            <person name="Dodson R.J."/>
            <person name="Haft D.H."/>
            <person name="Gwinn M.L."/>
            <person name="Nelson W.C."/>
            <person name="Richardson D.L."/>
            <person name="Moffat K.S."/>
            <person name="Qin H."/>
            <person name="Jiang L."/>
            <person name="Pamphile W."/>
            <person name="Crosby M."/>
            <person name="Shen M."/>
            <person name="Vamathevan J.J."/>
            <person name="Lam P."/>
            <person name="McDonald L.A."/>
            <person name="Utterback T.R."/>
            <person name="Zalewski C."/>
            <person name="Makarova K.S."/>
            <person name="Aravind L."/>
            <person name="Daly M.J."/>
            <person name="Minton K.W."/>
            <person name="Fleischmann R.D."/>
            <person name="Ketchum K.A."/>
            <person name="Nelson K.E."/>
            <person name="Salzberg S.L."/>
            <person name="Smith H.O."/>
            <person name="Venter J.C."/>
            <person name="Fraser C.M."/>
        </authorList>
    </citation>
    <scope>NUCLEOTIDE SEQUENCE [LARGE SCALE GENOMIC DNA]</scope>
    <source>
        <strain>ATCC 13939 / DSM 20539 / JCM 16871 / CCUG 27074 / LMG 4051 / NBRC 15346 / NCIMB 9279 / VKM B-1422 / R1</strain>
    </source>
</reference>
<keyword id="KW-0002">3D-structure</keyword>
<keyword id="KW-0963">Cytoplasm</keyword>
<keyword id="KW-0227">DNA damage</keyword>
<keyword id="KW-0234">DNA repair</keyword>
<keyword id="KW-0378">Hydrolase</keyword>
<keyword id="KW-1185">Reference proteome</keyword>